<proteinExistence type="inferred from homology"/>
<dbReference type="EMBL" id="AJ965256">
    <property type="protein sequence ID" value="CAI82646.1"/>
    <property type="molecule type" value="Genomic_DNA"/>
</dbReference>
<dbReference type="RefSeq" id="WP_011309003.1">
    <property type="nucleotide sequence ID" value="NC_007356.1"/>
</dbReference>
<dbReference type="SMR" id="Q3ZZL7"/>
<dbReference type="KEGG" id="deh:cbdbA446"/>
<dbReference type="HOGENOM" id="CLU_078858_2_1_0"/>
<dbReference type="Proteomes" id="UP000000433">
    <property type="component" value="Chromosome"/>
</dbReference>
<dbReference type="GO" id="GO:0022625">
    <property type="term" value="C:cytosolic large ribosomal subunit"/>
    <property type="evidence" value="ECO:0007669"/>
    <property type="project" value="TreeGrafter"/>
</dbReference>
<dbReference type="GO" id="GO:0019843">
    <property type="term" value="F:rRNA binding"/>
    <property type="evidence" value="ECO:0007669"/>
    <property type="project" value="UniProtKB-UniRule"/>
</dbReference>
<dbReference type="GO" id="GO:0003735">
    <property type="term" value="F:structural constituent of ribosome"/>
    <property type="evidence" value="ECO:0007669"/>
    <property type="project" value="InterPro"/>
</dbReference>
<dbReference type="GO" id="GO:0000049">
    <property type="term" value="F:tRNA binding"/>
    <property type="evidence" value="ECO:0007669"/>
    <property type="project" value="UniProtKB-KW"/>
</dbReference>
<dbReference type="GO" id="GO:0006412">
    <property type="term" value="P:translation"/>
    <property type="evidence" value="ECO:0007669"/>
    <property type="project" value="UniProtKB-UniRule"/>
</dbReference>
<dbReference type="CDD" id="cd01433">
    <property type="entry name" value="Ribosomal_L16_L10e"/>
    <property type="match status" value="1"/>
</dbReference>
<dbReference type="FunFam" id="3.90.1170.10:FF:000001">
    <property type="entry name" value="50S ribosomal protein L16"/>
    <property type="match status" value="1"/>
</dbReference>
<dbReference type="Gene3D" id="3.90.1170.10">
    <property type="entry name" value="Ribosomal protein L10e/L16"/>
    <property type="match status" value="1"/>
</dbReference>
<dbReference type="HAMAP" id="MF_01342">
    <property type="entry name" value="Ribosomal_uL16"/>
    <property type="match status" value="1"/>
</dbReference>
<dbReference type="InterPro" id="IPR047873">
    <property type="entry name" value="Ribosomal_uL16"/>
</dbReference>
<dbReference type="InterPro" id="IPR000114">
    <property type="entry name" value="Ribosomal_uL16_bact-type"/>
</dbReference>
<dbReference type="InterPro" id="IPR020798">
    <property type="entry name" value="Ribosomal_uL16_CS"/>
</dbReference>
<dbReference type="InterPro" id="IPR016180">
    <property type="entry name" value="Ribosomal_uL16_dom"/>
</dbReference>
<dbReference type="InterPro" id="IPR036920">
    <property type="entry name" value="Ribosomal_uL16_sf"/>
</dbReference>
<dbReference type="NCBIfam" id="TIGR01164">
    <property type="entry name" value="rplP_bact"/>
    <property type="match status" value="1"/>
</dbReference>
<dbReference type="PANTHER" id="PTHR12220">
    <property type="entry name" value="50S/60S RIBOSOMAL PROTEIN L16"/>
    <property type="match status" value="1"/>
</dbReference>
<dbReference type="PANTHER" id="PTHR12220:SF13">
    <property type="entry name" value="LARGE RIBOSOMAL SUBUNIT PROTEIN UL16M"/>
    <property type="match status" value="1"/>
</dbReference>
<dbReference type="Pfam" id="PF00252">
    <property type="entry name" value="Ribosomal_L16"/>
    <property type="match status" value="1"/>
</dbReference>
<dbReference type="PRINTS" id="PR00060">
    <property type="entry name" value="RIBOSOMALL16"/>
</dbReference>
<dbReference type="SUPFAM" id="SSF54686">
    <property type="entry name" value="Ribosomal protein L16p/L10e"/>
    <property type="match status" value="1"/>
</dbReference>
<dbReference type="PROSITE" id="PS00586">
    <property type="entry name" value="RIBOSOMAL_L16_1"/>
    <property type="match status" value="1"/>
</dbReference>
<reference key="1">
    <citation type="journal article" date="2005" name="Nat. Biotechnol.">
        <title>Genome sequence of the chlorinated compound-respiring bacterium Dehalococcoides species strain CBDB1.</title>
        <authorList>
            <person name="Kube M."/>
            <person name="Beck A."/>
            <person name="Zinder S.H."/>
            <person name="Kuhl H."/>
            <person name="Reinhardt R."/>
            <person name="Adrian L."/>
        </authorList>
    </citation>
    <scope>NUCLEOTIDE SEQUENCE [LARGE SCALE GENOMIC DNA]</scope>
    <source>
        <strain>CBDB1</strain>
    </source>
</reference>
<feature type="chain" id="PRO_0000062092" description="Large ribosomal subunit protein uL16">
    <location>
        <begin position="1"/>
        <end position="149"/>
    </location>
</feature>
<sequence>MLQPKRVKFRKVQRGRRDGAAHKGNTVAFGEFALQSLEAGWITARQIEATRRAITRYIRRGGQVWIRIFPDKPITKKPAETRQGGGKGAPEEWVAVVRRGRIMFEIGGVTPEAAKEAMRLASYKMPVKTRFVARDIPVVAGETEVEEAE</sequence>
<accession>Q3ZZL7</accession>
<keyword id="KW-0687">Ribonucleoprotein</keyword>
<keyword id="KW-0689">Ribosomal protein</keyword>
<keyword id="KW-0694">RNA-binding</keyword>
<keyword id="KW-0699">rRNA-binding</keyword>
<keyword id="KW-0820">tRNA-binding</keyword>
<organism>
    <name type="scientific">Dehalococcoides mccartyi (strain CBDB1)</name>
    <dbReference type="NCBI Taxonomy" id="255470"/>
    <lineage>
        <taxon>Bacteria</taxon>
        <taxon>Bacillati</taxon>
        <taxon>Chloroflexota</taxon>
        <taxon>Dehalococcoidia</taxon>
        <taxon>Dehalococcoidales</taxon>
        <taxon>Dehalococcoidaceae</taxon>
        <taxon>Dehalococcoides</taxon>
    </lineage>
</organism>
<comment type="function">
    <text evidence="1">Binds 23S rRNA and is also seen to make contacts with the A and possibly P site tRNAs.</text>
</comment>
<comment type="subunit">
    <text evidence="1">Part of the 50S ribosomal subunit.</text>
</comment>
<comment type="similarity">
    <text evidence="1">Belongs to the universal ribosomal protein uL16 family.</text>
</comment>
<protein>
    <recommendedName>
        <fullName evidence="1">Large ribosomal subunit protein uL16</fullName>
    </recommendedName>
    <alternativeName>
        <fullName evidence="2">50S ribosomal protein L16</fullName>
    </alternativeName>
</protein>
<name>RL16_DEHMC</name>
<gene>
    <name evidence="1" type="primary">rplP</name>
    <name type="ordered locus">cbdbA446</name>
</gene>
<evidence type="ECO:0000255" key="1">
    <source>
        <dbReference type="HAMAP-Rule" id="MF_01342"/>
    </source>
</evidence>
<evidence type="ECO:0000305" key="2"/>